<sequence>MKQLLDFIPLIIFFALYKFYDIYVATGALIAATTLQVIVTYAMYKKVEKMQLITFVMVALFGGMTLALHDDNFIKWKVTIVYVVFALGLTISQIMGKPAIKGMLGKELTLPDAVWSTINWAWVMFFSGCAALNLYVAYHLPLDVWVNFKVFGLLAATFVFTLLTGGYIYKHLPHEPKQKNQ</sequence>
<accession>A5F7I4</accession>
<accession>C3M1A0</accession>
<proteinExistence type="inferred from homology"/>
<gene>
    <name evidence="1" type="primary">yciB</name>
    <name type="ordered locus">VC0395_A1304</name>
    <name type="ordered locus">VC395_1818</name>
</gene>
<protein>
    <recommendedName>
        <fullName evidence="1">Inner membrane-spanning protein YciB</fullName>
    </recommendedName>
</protein>
<name>YCIB_VIBC3</name>
<keyword id="KW-0997">Cell inner membrane</keyword>
<keyword id="KW-1003">Cell membrane</keyword>
<keyword id="KW-0472">Membrane</keyword>
<keyword id="KW-0812">Transmembrane</keyword>
<keyword id="KW-1133">Transmembrane helix</keyword>
<comment type="function">
    <text evidence="1">Plays a role in cell envelope biogenesis, maintenance of cell envelope integrity and membrane homeostasis.</text>
</comment>
<comment type="subcellular location">
    <subcellularLocation>
        <location evidence="1">Cell inner membrane</location>
        <topology evidence="1">Multi-pass membrane protein</topology>
    </subcellularLocation>
</comment>
<comment type="similarity">
    <text evidence="1">Belongs to the YciB family.</text>
</comment>
<reference key="1">
    <citation type="submission" date="2007-03" db="EMBL/GenBank/DDBJ databases">
        <authorList>
            <person name="Heidelberg J."/>
        </authorList>
    </citation>
    <scope>NUCLEOTIDE SEQUENCE [LARGE SCALE GENOMIC DNA]</scope>
    <source>
        <strain>ATCC 39541 / Classical Ogawa 395 / O395</strain>
    </source>
</reference>
<reference key="2">
    <citation type="journal article" date="2008" name="PLoS ONE">
        <title>A recalibrated molecular clock and independent origins for the cholera pandemic clones.</title>
        <authorList>
            <person name="Feng L."/>
            <person name="Reeves P.R."/>
            <person name="Lan R."/>
            <person name="Ren Y."/>
            <person name="Gao C."/>
            <person name="Zhou Z."/>
            <person name="Ren Y."/>
            <person name="Cheng J."/>
            <person name="Wang W."/>
            <person name="Wang J."/>
            <person name="Qian W."/>
            <person name="Li D."/>
            <person name="Wang L."/>
        </authorList>
    </citation>
    <scope>NUCLEOTIDE SEQUENCE [LARGE SCALE GENOMIC DNA]</scope>
    <source>
        <strain>ATCC 39541 / Classical Ogawa 395 / O395</strain>
    </source>
</reference>
<dbReference type="EMBL" id="CP000627">
    <property type="protein sequence ID" value="ABQ21215.1"/>
    <property type="molecule type" value="Genomic_DNA"/>
</dbReference>
<dbReference type="EMBL" id="CP001235">
    <property type="protein sequence ID" value="ACP09816.1"/>
    <property type="molecule type" value="Genomic_DNA"/>
</dbReference>
<dbReference type="RefSeq" id="WP_000811594.1">
    <property type="nucleotide sequence ID" value="NZ_JAACZH010000011.1"/>
</dbReference>
<dbReference type="KEGG" id="vco:VC0395_A1304"/>
<dbReference type="KEGG" id="vcr:VC395_1818"/>
<dbReference type="PATRIC" id="fig|345073.21.peg.1761"/>
<dbReference type="eggNOG" id="COG2917">
    <property type="taxonomic scope" value="Bacteria"/>
</dbReference>
<dbReference type="HOGENOM" id="CLU_089554_2_0_6"/>
<dbReference type="OrthoDB" id="9788219at2"/>
<dbReference type="Proteomes" id="UP000000249">
    <property type="component" value="Chromosome 2"/>
</dbReference>
<dbReference type="GO" id="GO:0005886">
    <property type="term" value="C:plasma membrane"/>
    <property type="evidence" value="ECO:0007669"/>
    <property type="project" value="UniProtKB-SubCell"/>
</dbReference>
<dbReference type="HAMAP" id="MF_00189">
    <property type="entry name" value="YciB"/>
    <property type="match status" value="1"/>
</dbReference>
<dbReference type="InterPro" id="IPR006008">
    <property type="entry name" value="YciB"/>
</dbReference>
<dbReference type="NCBIfam" id="TIGR00997">
    <property type="entry name" value="ispZ"/>
    <property type="match status" value="1"/>
</dbReference>
<dbReference type="NCBIfam" id="NF001324">
    <property type="entry name" value="PRK00259.1-2"/>
    <property type="match status" value="1"/>
</dbReference>
<dbReference type="NCBIfam" id="NF001325">
    <property type="entry name" value="PRK00259.1-3"/>
    <property type="match status" value="1"/>
</dbReference>
<dbReference type="PANTHER" id="PTHR36917:SF1">
    <property type="entry name" value="INNER MEMBRANE-SPANNING PROTEIN YCIB"/>
    <property type="match status" value="1"/>
</dbReference>
<dbReference type="PANTHER" id="PTHR36917">
    <property type="entry name" value="INTRACELLULAR SEPTATION PROTEIN A-RELATED"/>
    <property type="match status" value="1"/>
</dbReference>
<dbReference type="Pfam" id="PF04279">
    <property type="entry name" value="IspA"/>
    <property type="match status" value="1"/>
</dbReference>
<organism>
    <name type="scientific">Vibrio cholerae serotype O1 (strain ATCC 39541 / Classical Ogawa 395 / O395)</name>
    <dbReference type="NCBI Taxonomy" id="345073"/>
    <lineage>
        <taxon>Bacteria</taxon>
        <taxon>Pseudomonadati</taxon>
        <taxon>Pseudomonadota</taxon>
        <taxon>Gammaproteobacteria</taxon>
        <taxon>Vibrionales</taxon>
        <taxon>Vibrionaceae</taxon>
        <taxon>Vibrio</taxon>
    </lineage>
</organism>
<feature type="chain" id="PRO_1000071695" description="Inner membrane-spanning protein YciB">
    <location>
        <begin position="1"/>
        <end position="181"/>
    </location>
</feature>
<feature type="transmembrane region" description="Helical" evidence="1">
    <location>
        <begin position="10"/>
        <end position="30"/>
    </location>
</feature>
<feature type="transmembrane region" description="Helical" evidence="1">
    <location>
        <begin position="50"/>
        <end position="70"/>
    </location>
</feature>
<feature type="transmembrane region" description="Helical" evidence="1">
    <location>
        <begin position="80"/>
        <end position="100"/>
    </location>
</feature>
<feature type="transmembrane region" description="Helical" evidence="1">
    <location>
        <begin position="120"/>
        <end position="140"/>
    </location>
</feature>
<feature type="transmembrane region" description="Helical" evidence="1">
    <location>
        <begin position="148"/>
        <end position="168"/>
    </location>
</feature>
<evidence type="ECO:0000255" key="1">
    <source>
        <dbReference type="HAMAP-Rule" id="MF_00189"/>
    </source>
</evidence>